<comment type="function">
    <text evidence="1">Required for nuclear migration.</text>
</comment>
<comment type="subunit">
    <text evidence="1">Self-associates. Interacts with PAC1 (By similarity).</text>
</comment>
<comment type="subcellular location">
    <subcellularLocation>
        <location>Cytoplasm</location>
        <location>Cytoskeleton</location>
    </subcellularLocation>
    <text evidence="1">Localizes to the plus ends of microtubules.</text>
</comment>
<comment type="similarity">
    <text evidence="4">Belongs to the nudE family.</text>
</comment>
<sequence length="635" mass="68418">MSEHGADLRFDSPEKEIKHWKSKVADMQDALRETESSLQDFVESSKELEQEMEKELSASNKTISDLKRRNEQLSGDLEDWKSKYSRALSEHNATLTTLQKELGQLRESVDIYKAKLRDTELTNDELENAERMVASSLADMEGKYNKTIEKTALLEEELIEKTRLDEENQRLKDELREMTEEMTILRDLVTRSRAISRADTMASSTYDDSTAPRSEQSFDSSPIKPSSAARATERPSSRQALSSPVTNRVPISRRLGAMGHNRRLSRDVRAAEAPSLAAVLDDSPTATTTSAAPTRSSTLSRRDPLAATPYHHGASTSHGLTSSPSARAQLRASVRAAARIGGAVSVSSAPRSTNLSANGGAAGSKRMMAEMISKMKALESRINSAKDLSRVVGPGDESAIPRPSSRMATIGSPSANGHNSIHMPTSTPRAPRASMDGNRTIGSSIPVPSRVRRPSSRMSERGTPPMPSLGLPRAQTPSSLHARGSSRADGPSPLPLHEFMDHDPASTLPHAARYAAAQASVAKRRTSMSGSGMSHSASHGSLAKVRSGSTLPRSTTPSTVAAPRVTQSSMTYYGAEASMSKRTPLSTRLASSHRNASSARGSINGPPSSWKTSAMPAQTLSRSRSSSLGSETETF</sequence>
<organism>
    <name type="scientific">Mycosarcoma maydis</name>
    <name type="common">Corn smut fungus</name>
    <name type="synonym">Ustilago maydis</name>
    <dbReference type="NCBI Taxonomy" id="5270"/>
    <lineage>
        <taxon>Eukaryota</taxon>
        <taxon>Fungi</taxon>
        <taxon>Dikarya</taxon>
        <taxon>Basidiomycota</taxon>
        <taxon>Ustilaginomycotina</taxon>
        <taxon>Ustilaginomycetes</taxon>
        <taxon>Ustilaginales</taxon>
        <taxon>Ustilaginaceae</taxon>
        <taxon>Mycosarcoma</taxon>
    </lineage>
</organism>
<protein>
    <recommendedName>
        <fullName>Nuclear distribution protein nudE homolog 1</fullName>
    </recommendedName>
</protein>
<name>NDE1_MYCMD</name>
<evidence type="ECO:0000250" key="1"/>
<evidence type="ECO:0000255" key="2"/>
<evidence type="ECO:0000256" key="3">
    <source>
        <dbReference type="SAM" id="MobiDB-lite"/>
    </source>
</evidence>
<evidence type="ECO:0000305" key="4"/>
<feature type="chain" id="PRO_0000240227" description="Nuclear distribution protein nudE homolog 1">
    <location>
        <begin position="1"/>
        <end position="635"/>
    </location>
</feature>
<feature type="region of interest" description="Disordered" evidence="3">
    <location>
        <begin position="35"/>
        <end position="63"/>
    </location>
</feature>
<feature type="region of interest" description="Disordered" evidence="3">
    <location>
        <begin position="200"/>
        <end position="267"/>
    </location>
</feature>
<feature type="region of interest" description="Disordered" evidence="3">
    <location>
        <begin position="279"/>
        <end position="328"/>
    </location>
</feature>
<feature type="region of interest" description="Disordered" evidence="3">
    <location>
        <begin position="389"/>
        <end position="504"/>
    </location>
</feature>
<feature type="region of interest" description="Disordered" evidence="3">
    <location>
        <begin position="516"/>
        <end position="635"/>
    </location>
</feature>
<feature type="coiled-coil region" evidence="2">
    <location>
        <begin position="14"/>
        <end position="192"/>
    </location>
</feature>
<feature type="compositionally biased region" description="Basic and acidic residues" evidence="3">
    <location>
        <begin position="43"/>
        <end position="56"/>
    </location>
</feature>
<feature type="compositionally biased region" description="Polar residues" evidence="3">
    <location>
        <begin position="201"/>
        <end position="224"/>
    </location>
</feature>
<feature type="compositionally biased region" description="Polar residues" evidence="3">
    <location>
        <begin position="237"/>
        <end position="246"/>
    </location>
</feature>
<feature type="compositionally biased region" description="Low complexity" evidence="3">
    <location>
        <begin position="280"/>
        <end position="299"/>
    </location>
</feature>
<feature type="compositionally biased region" description="Polar residues" evidence="3">
    <location>
        <begin position="314"/>
        <end position="326"/>
    </location>
</feature>
<feature type="compositionally biased region" description="Polar residues" evidence="3">
    <location>
        <begin position="411"/>
        <end position="428"/>
    </location>
</feature>
<feature type="compositionally biased region" description="Low complexity" evidence="3">
    <location>
        <begin position="516"/>
        <end position="541"/>
    </location>
</feature>
<feature type="compositionally biased region" description="Polar residues" evidence="3">
    <location>
        <begin position="547"/>
        <end position="571"/>
    </location>
</feature>
<feature type="compositionally biased region" description="Polar residues" evidence="3">
    <location>
        <begin position="580"/>
        <end position="619"/>
    </location>
</feature>
<feature type="compositionally biased region" description="Low complexity" evidence="3">
    <location>
        <begin position="620"/>
        <end position="635"/>
    </location>
</feature>
<proteinExistence type="inferred from homology"/>
<reference key="1">
    <citation type="journal article" date="2006" name="Nature">
        <title>Insights from the genome of the biotrophic fungal plant pathogen Ustilago maydis.</title>
        <authorList>
            <person name="Kaemper J."/>
            <person name="Kahmann R."/>
            <person name="Boelker M."/>
            <person name="Ma L.-J."/>
            <person name="Brefort T."/>
            <person name="Saville B.J."/>
            <person name="Banuett F."/>
            <person name="Kronstad J.W."/>
            <person name="Gold S.E."/>
            <person name="Mueller O."/>
            <person name="Perlin M.H."/>
            <person name="Woesten H.A.B."/>
            <person name="de Vries R."/>
            <person name="Ruiz-Herrera J."/>
            <person name="Reynaga-Pena C.G."/>
            <person name="Snetselaar K."/>
            <person name="McCann M."/>
            <person name="Perez-Martin J."/>
            <person name="Feldbruegge M."/>
            <person name="Basse C.W."/>
            <person name="Steinberg G."/>
            <person name="Ibeas J.I."/>
            <person name="Holloman W."/>
            <person name="Guzman P."/>
            <person name="Farman M.L."/>
            <person name="Stajich J.E."/>
            <person name="Sentandreu R."/>
            <person name="Gonzalez-Prieto J.M."/>
            <person name="Kennell J.C."/>
            <person name="Molina L."/>
            <person name="Schirawski J."/>
            <person name="Mendoza-Mendoza A."/>
            <person name="Greilinger D."/>
            <person name="Muench K."/>
            <person name="Roessel N."/>
            <person name="Scherer M."/>
            <person name="Vranes M."/>
            <person name="Ladendorf O."/>
            <person name="Vincon V."/>
            <person name="Fuchs U."/>
            <person name="Sandrock B."/>
            <person name="Meng S."/>
            <person name="Ho E.C.H."/>
            <person name="Cahill M.J."/>
            <person name="Boyce K.J."/>
            <person name="Klose J."/>
            <person name="Klosterman S.J."/>
            <person name="Deelstra H.J."/>
            <person name="Ortiz-Castellanos L."/>
            <person name="Li W."/>
            <person name="Sanchez-Alonso P."/>
            <person name="Schreier P.H."/>
            <person name="Haeuser-Hahn I."/>
            <person name="Vaupel M."/>
            <person name="Koopmann E."/>
            <person name="Friedrich G."/>
            <person name="Voss H."/>
            <person name="Schlueter T."/>
            <person name="Margolis J."/>
            <person name="Platt D."/>
            <person name="Swimmer C."/>
            <person name="Gnirke A."/>
            <person name="Chen F."/>
            <person name="Vysotskaia V."/>
            <person name="Mannhaupt G."/>
            <person name="Gueldener U."/>
            <person name="Muensterkoetter M."/>
            <person name="Haase D."/>
            <person name="Oesterheld M."/>
            <person name="Mewes H.-W."/>
            <person name="Mauceli E.W."/>
            <person name="DeCaprio D."/>
            <person name="Wade C.M."/>
            <person name="Butler J."/>
            <person name="Young S.K."/>
            <person name="Jaffe D.B."/>
            <person name="Calvo S.E."/>
            <person name="Nusbaum C."/>
            <person name="Galagan J.E."/>
            <person name="Birren B.W."/>
        </authorList>
    </citation>
    <scope>NUCLEOTIDE SEQUENCE [LARGE SCALE GENOMIC DNA]</scope>
    <source>
        <strain>DSM 14603 / FGSC 9021 / UM521</strain>
    </source>
</reference>
<reference key="2">
    <citation type="submission" date="2014-09" db="EMBL/GenBank/DDBJ databases">
        <authorList>
            <person name="Gueldener U."/>
            <person name="Muensterkoetter M."/>
            <person name="Walter M.C."/>
            <person name="Mannhaupt G."/>
            <person name="Kahmann R."/>
        </authorList>
    </citation>
    <scope>GENOME REANNOTATION</scope>
    <source>
        <strain>DSM 14603 / FGSC 9021 / UM521</strain>
    </source>
</reference>
<dbReference type="EMBL" id="CM003143">
    <property type="protein sequence ID" value="KIS70241.1"/>
    <property type="molecule type" value="Genomic_DNA"/>
</dbReference>
<dbReference type="RefSeq" id="XP_011388417.1">
    <property type="nucleotide sequence ID" value="XM_011390115.1"/>
</dbReference>
<dbReference type="SMR" id="Q4P0N6"/>
<dbReference type="STRING" id="237631.Q4P0N6"/>
<dbReference type="EnsemblFungi" id="KIS70241">
    <property type="protein sequence ID" value="KIS70241"/>
    <property type="gene ID" value="UMAG_12335"/>
</dbReference>
<dbReference type="GeneID" id="23568080"/>
<dbReference type="KEGG" id="uma:UMAG_12335"/>
<dbReference type="VEuPathDB" id="FungiDB:UMAG_12335"/>
<dbReference type="eggNOG" id="KOG1853">
    <property type="taxonomic scope" value="Eukaryota"/>
</dbReference>
<dbReference type="HOGENOM" id="CLU_028360_0_0_1"/>
<dbReference type="InParanoid" id="Q4P0N6"/>
<dbReference type="OrthoDB" id="5877028at2759"/>
<dbReference type="Proteomes" id="UP000000561">
    <property type="component" value="Chromosome 4"/>
</dbReference>
<dbReference type="GO" id="GO:0005737">
    <property type="term" value="C:cytoplasm"/>
    <property type="evidence" value="ECO:0007669"/>
    <property type="project" value="UniProtKB-KW"/>
</dbReference>
<dbReference type="GO" id="GO:0005871">
    <property type="term" value="C:kinesin complex"/>
    <property type="evidence" value="ECO:0000318"/>
    <property type="project" value="GO_Central"/>
</dbReference>
<dbReference type="GO" id="GO:0000776">
    <property type="term" value="C:kinetochore"/>
    <property type="evidence" value="ECO:0000318"/>
    <property type="project" value="GO_Central"/>
</dbReference>
<dbReference type="GO" id="GO:0005874">
    <property type="term" value="C:microtubule"/>
    <property type="evidence" value="ECO:0007669"/>
    <property type="project" value="UniProtKB-KW"/>
</dbReference>
<dbReference type="GO" id="GO:0008017">
    <property type="term" value="F:microtubule binding"/>
    <property type="evidence" value="ECO:0000318"/>
    <property type="project" value="GO_Central"/>
</dbReference>
<dbReference type="GO" id="GO:0051642">
    <property type="term" value="P:centrosome localization"/>
    <property type="evidence" value="ECO:0000318"/>
    <property type="project" value="GO_Central"/>
</dbReference>
<dbReference type="GO" id="GO:0007059">
    <property type="term" value="P:chromosome segregation"/>
    <property type="evidence" value="ECO:0000318"/>
    <property type="project" value="GO_Central"/>
</dbReference>
<dbReference type="GO" id="GO:0051303">
    <property type="term" value="P:establishment of chromosome localization"/>
    <property type="evidence" value="ECO:0000318"/>
    <property type="project" value="GO_Central"/>
</dbReference>
<dbReference type="GO" id="GO:0000132">
    <property type="term" value="P:establishment of mitotic spindle orientation"/>
    <property type="evidence" value="ECO:0000318"/>
    <property type="project" value="GO_Central"/>
</dbReference>
<dbReference type="GO" id="GO:0007020">
    <property type="term" value="P:microtubule nucleation"/>
    <property type="evidence" value="ECO:0000318"/>
    <property type="project" value="GO_Central"/>
</dbReference>
<dbReference type="GO" id="GO:0047496">
    <property type="term" value="P:vesicle transport along microtubule"/>
    <property type="evidence" value="ECO:0000318"/>
    <property type="project" value="GO_Central"/>
</dbReference>
<dbReference type="Gene3D" id="6.10.250.1080">
    <property type="match status" value="1"/>
</dbReference>
<dbReference type="InterPro" id="IPR033494">
    <property type="entry name" value="NUDE"/>
</dbReference>
<dbReference type="InterPro" id="IPR006964">
    <property type="entry name" value="NUDE_dom"/>
</dbReference>
<dbReference type="PANTHER" id="PTHR10921:SF1">
    <property type="entry name" value="NUCLEAR DISTRIBUTION PROTEIN NUDE HOMOLOG"/>
    <property type="match status" value="1"/>
</dbReference>
<dbReference type="PANTHER" id="PTHR10921">
    <property type="entry name" value="NUCLEAR DISTRIBUTION PROTEIN NUDE HOMOLOG 1"/>
    <property type="match status" value="1"/>
</dbReference>
<dbReference type="Pfam" id="PF04880">
    <property type="entry name" value="NUDE_C"/>
    <property type="match status" value="1"/>
</dbReference>
<dbReference type="SUPFAM" id="SSF57997">
    <property type="entry name" value="Tropomyosin"/>
    <property type="match status" value="1"/>
</dbReference>
<accession>Q4P0N6</accession>
<accession>A0A0D1E347</accession>
<keyword id="KW-0175">Coiled coil</keyword>
<keyword id="KW-0963">Cytoplasm</keyword>
<keyword id="KW-0206">Cytoskeleton</keyword>
<keyword id="KW-0493">Microtubule</keyword>
<keyword id="KW-1185">Reference proteome</keyword>
<keyword id="KW-0813">Transport</keyword>
<gene>
    <name type="primary">NDE1</name>
    <name type="ORF">UMAG_12335</name>
</gene>